<sequence length="356" mass="37498">MDAGVTESGLNVTLTIRLLMHGKEVGSIIGKKGESVKRIREESGARINISEGNCPERIITLTGPTNAIFKAFAMIIDKLEEDINSSMTNSTAASRPPVTLRLVVPATQCGSLIGKGGCKIKEIRESTGAQVQVAGDMLPNSTERAITIAGVPQSVTECVKQICLVMLETLSQSPQGRVMTIPYQPMPASSPVICAGGQDRCSDAAGYPHATHDLEGPPLDAYSIQGQHTISPLDLAKLNQVARQQSHFAMMHGGTGFAGIDSSSPEVKGYWASLDASTQTTHELTIPNNLIGCIIGRQGANINEIRQMSGAQIKIANPVEGSSGRQVTITGSAASISLAQYLINARLSSEKGMGCS</sequence>
<proteinExistence type="evidence at protein level"/>
<organism>
    <name type="scientific">Mus musculus</name>
    <name type="common">Mouse</name>
    <dbReference type="NCBI Taxonomy" id="10090"/>
    <lineage>
        <taxon>Eukaryota</taxon>
        <taxon>Metazoa</taxon>
        <taxon>Chordata</taxon>
        <taxon>Craniata</taxon>
        <taxon>Vertebrata</taxon>
        <taxon>Euteleostomi</taxon>
        <taxon>Mammalia</taxon>
        <taxon>Eutheria</taxon>
        <taxon>Euarchontoglires</taxon>
        <taxon>Glires</taxon>
        <taxon>Rodentia</taxon>
        <taxon>Myomorpha</taxon>
        <taxon>Muroidea</taxon>
        <taxon>Muridae</taxon>
        <taxon>Murinae</taxon>
        <taxon>Mus</taxon>
        <taxon>Mus</taxon>
    </lineage>
</organism>
<evidence type="ECO:0000250" key="1">
    <source>
        <dbReference type="UniProtKB" id="Q15365"/>
    </source>
</evidence>
<evidence type="ECO:0000255" key="2">
    <source>
        <dbReference type="PROSITE-ProRule" id="PRU00117"/>
    </source>
</evidence>
<evidence type="ECO:0000269" key="3">
    <source>
    </source>
</evidence>
<evidence type="ECO:0000269" key="4">
    <source>
    </source>
</evidence>
<evidence type="ECO:0007744" key="5">
    <source>
    </source>
</evidence>
<evidence type="ECO:0007744" key="6">
    <source>
    </source>
</evidence>
<protein>
    <recommendedName>
        <fullName>Poly(rC)-binding protein 1</fullName>
    </recommendedName>
    <alternativeName>
        <fullName>Alpha-CP1</fullName>
    </alternativeName>
    <alternativeName>
        <fullName>Heterogeneous nuclear ribonucleoprotein E1</fullName>
        <shortName>hnRNP E1</shortName>
    </alternativeName>
</protein>
<reference key="1">
    <citation type="journal article" date="1999" name="J. Biol. Chem.">
        <title>A set of highly conserved RNA-binding proteins, alphaCP-1 and alphaCP-2, implicated in mRNA stabilization, are coexpressed from an intronless gene and its intron-containing paralog.</title>
        <authorList>
            <person name="Makeyev A.V."/>
            <person name="Chkheidze A.N."/>
            <person name="Liebhaber S.A."/>
        </authorList>
    </citation>
    <scope>NUCLEOTIDE SEQUENCE [GENOMIC DNA / MRNA]</scope>
</reference>
<reference key="2">
    <citation type="journal article" date="2004" name="Genome Res.">
        <title>The status, quality, and expansion of the NIH full-length cDNA project: the Mammalian Gene Collection (MGC).</title>
        <authorList>
            <consortium name="The MGC Project Team"/>
        </authorList>
    </citation>
    <scope>NUCLEOTIDE SEQUENCE [LARGE SCALE MRNA]</scope>
    <source>
        <strain>Czech II</strain>
        <strain>FVB/N</strain>
        <tissue>Mammary gland</tissue>
    </source>
</reference>
<reference key="3">
    <citation type="submission" date="2009-01" db="UniProtKB">
        <authorList>
            <person name="Lubec G."/>
            <person name="Sunyer B."/>
            <person name="Chen W.-Q."/>
        </authorList>
    </citation>
    <scope>PROTEIN SEQUENCE OF 326-346</scope>
    <scope>IDENTIFICATION BY MASS SPECTROMETRY</scope>
    <source>
        <strain>OF1</strain>
        <tissue>Hippocampus</tissue>
    </source>
</reference>
<reference key="4">
    <citation type="journal article" date="2009" name="Mol. Cell. Proteomics">
        <title>Large scale localization of protein phosphorylation by use of electron capture dissociation mass spectrometry.</title>
        <authorList>
            <person name="Sweet S.M."/>
            <person name="Bailey C.M."/>
            <person name="Cunningham D.L."/>
            <person name="Heath J.K."/>
            <person name="Cooper H.J."/>
        </authorList>
    </citation>
    <scope>PHOSPHORYLATION [LARGE SCALE ANALYSIS] AT SER-173</scope>
    <scope>IDENTIFICATION BY MASS SPECTROMETRY [LARGE SCALE ANALYSIS]</scope>
    <source>
        <tissue>Embryonic fibroblast</tissue>
    </source>
</reference>
<reference key="5">
    <citation type="journal article" date="2010" name="Cell">
        <title>A tissue-specific atlas of mouse protein phosphorylation and expression.</title>
        <authorList>
            <person name="Huttlin E.L."/>
            <person name="Jedrychowski M.P."/>
            <person name="Elias J.E."/>
            <person name="Goswami T."/>
            <person name="Rad R."/>
            <person name="Beausoleil S.A."/>
            <person name="Villen J."/>
            <person name="Haas W."/>
            <person name="Sowa M.E."/>
            <person name="Gygi S.P."/>
        </authorList>
    </citation>
    <scope>PHOSPHORYLATION [LARGE SCALE ANALYSIS] AT SER-173; SER-189 AND SER-190</scope>
    <scope>IDENTIFICATION BY MASS SPECTROMETRY [LARGE SCALE ANALYSIS]</scope>
    <source>
        <tissue>Brain</tissue>
        <tissue>Brown adipose tissue</tissue>
        <tissue>Heart</tissue>
        <tissue>Kidney</tissue>
        <tissue>Liver</tissue>
        <tissue>Lung</tissue>
        <tissue>Pancreas</tissue>
        <tissue>Spleen</tissue>
        <tissue>Testis</tissue>
    </source>
</reference>
<reference key="6">
    <citation type="journal article" date="2016" name="Mol. Cell. Biol.">
        <title>The poly(C) binding protein Pcbp2 and its retrotransposed derivative Pcbp1 are independently essential to mouse development.</title>
        <authorList>
            <person name="Ghanem L.R."/>
            <person name="Kromer A."/>
            <person name="Silverman I.M."/>
            <person name="Chatterji P."/>
            <person name="Traxler E."/>
            <person name="Penzo-Mendez A."/>
            <person name="Weiss M.J."/>
            <person name="Stanger B.Z."/>
            <person name="Liebhaber S.A."/>
        </authorList>
    </citation>
    <scope>DISRUPTION PHENOTYPE</scope>
</reference>
<reference key="7">
    <citation type="journal article" date="2021" name="Mol. Cell. Biol.">
        <title>RNA-binding proteins PCBP1 and PCBP2 are critical determinants of murine erythropoiesis.</title>
        <authorList>
            <person name="Ji X."/>
            <person name="Jha A."/>
            <person name="Humenik J."/>
            <person name="Ghanem L.R."/>
            <person name="Kromer A."/>
            <person name="Duncan-Lewis C."/>
            <person name="Traxler E."/>
            <person name="Weiss M.J."/>
            <person name="Barash Y."/>
            <person name="Liebhaber S.A."/>
        </authorList>
    </citation>
    <scope>FUNCTION</scope>
    <scope>DISRUPTION PHENOTYPE</scope>
</reference>
<feature type="chain" id="PRO_0000050088" description="Poly(rC)-binding protein 1">
    <location>
        <begin position="1"/>
        <end position="356"/>
    </location>
</feature>
<feature type="domain" description="KH 1" evidence="2">
    <location>
        <begin position="13"/>
        <end position="75"/>
    </location>
</feature>
<feature type="domain" description="KH 2" evidence="2">
    <location>
        <begin position="97"/>
        <end position="162"/>
    </location>
</feature>
<feature type="domain" description="KH 3" evidence="2">
    <location>
        <begin position="279"/>
        <end position="343"/>
    </location>
</feature>
<feature type="modified residue" description="N-acetylmethionine" evidence="1">
    <location>
        <position position="1"/>
    </location>
</feature>
<feature type="modified residue" description="Phosphoserine" evidence="5 6">
    <location>
        <position position="173"/>
    </location>
</feature>
<feature type="modified residue" description="Phosphoserine" evidence="6">
    <location>
        <position position="189"/>
    </location>
</feature>
<feature type="modified residue" description="Phosphoserine" evidence="6">
    <location>
        <position position="190"/>
    </location>
</feature>
<feature type="modified residue" description="Phosphoserine" evidence="1">
    <location>
        <position position="246"/>
    </location>
</feature>
<feature type="modified residue" description="Phosphoserine" evidence="1">
    <location>
        <position position="264"/>
    </location>
</feature>
<feature type="modified residue" description="Phosphoserine" evidence="1">
    <location>
        <position position="273"/>
    </location>
</feature>
<feature type="cross-link" description="Glycyl lysine isopeptide (Lys-Gly) (interchain with G-Cter in SUMO2)" evidence="1">
    <location>
        <position position="115"/>
    </location>
</feature>
<keyword id="KW-0007">Acetylation</keyword>
<keyword id="KW-0963">Cytoplasm</keyword>
<keyword id="KW-0903">Direct protein sequencing</keyword>
<keyword id="KW-0238">DNA-binding</keyword>
<keyword id="KW-1017">Isopeptide bond</keyword>
<keyword id="KW-0539">Nucleus</keyword>
<keyword id="KW-0597">Phosphoprotein</keyword>
<keyword id="KW-1185">Reference proteome</keyword>
<keyword id="KW-0677">Repeat</keyword>
<keyword id="KW-0687">Ribonucleoprotein</keyword>
<keyword id="KW-0694">RNA-binding</keyword>
<keyword id="KW-0832">Ubl conjugation</keyword>
<accession>P60335</accession>
<name>PCBP1_MOUSE</name>
<dbReference type="EMBL" id="AF139894">
    <property type="protein sequence ID" value="AAD51920.1"/>
    <property type="molecule type" value="mRNA"/>
</dbReference>
<dbReference type="EMBL" id="AF139895">
    <property type="protein sequence ID" value="AAD51921.1"/>
    <property type="molecule type" value="Genomic_DNA"/>
</dbReference>
<dbReference type="EMBL" id="BC069915">
    <property type="protein sequence ID" value="AAH69915.1"/>
    <property type="molecule type" value="mRNA"/>
</dbReference>
<dbReference type="EMBL" id="BC004793">
    <property type="protein sequence ID" value="AAH04793.1"/>
    <property type="molecule type" value="mRNA"/>
</dbReference>
<dbReference type="CCDS" id="CCDS20314.1"/>
<dbReference type="RefSeq" id="NP_035995.1">
    <property type="nucleotide sequence ID" value="NM_011865.4"/>
</dbReference>
<dbReference type="SMR" id="P60335"/>
<dbReference type="BioGRID" id="204835">
    <property type="interactions" value="105"/>
</dbReference>
<dbReference type="FunCoup" id="P60335">
    <property type="interactions" value="2317"/>
</dbReference>
<dbReference type="IntAct" id="P60335">
    <property type="interactions" value="18"/>
</dbReference>
<dbReference type="MINT" id="P60335"/>
<dbReference type="STRING" id="10090.ENSMUSP00000054863"/>
<dbReference type="GlyGen" id="P60335">
    <property type="glycosylation" value="4 sites, 3 N-linked glycans (3 sites), 1 O-linked glycan (1 site)"/>
</dbReference>
<dbReference type="iPTMnet" id="P60335"/>
<dbReference type="MetOSite" id="P60335"/>
<dbReference type="PhosphoSitePlus" id="P60335"/>
<dbReference type="SwissPalm" id="P60335"/>
<dbReference type="REPRODUCTION-2DPAGE" id="IPI00128904"/>
<dbReference type="REPRODUCTION-2DPAGE" id="P60335"/>
<dbReference type="jPOST" id="P60335"/>
<dbReference type="PaxDb" id="10090-ENSMUSP00000054863"/>
<dbReference type="PeptideAtlas" id="P60335"/>
<dbReference type="ProteomicsDB" id="294026"/>
<dbReference type="Pumba" id="P60335"/>
<dbReference type="Antibodypedia" id="16295">
    <property type="antibodies" value="449 antibodies from 36 providers"/>
</dbReference>
<dbReference type="DNASU" id="23983"/>
<dbReference type="Ensembl" id="ENSMUST00000053015.7">
    <property type="protein sequence ID" value="ENSMUSP00000054863.6"/>
    <property type="gene ID" value="ENSMUSG00000051695.7"/>
</dbReference>
<dbReference type="GeneID" id="23983"/>
<dbReference type="KEGG" id="mmu:23983"/>
<dbReference type="UCSC" id="uc009csc.1">
    <property type="organism name" value="mouse"/>
</dbReference>
<dbReference type="AGR" id="MGI:1345635"/>
<dbReference type="CTD" id="5093"/>
<dbReference type="MGI" id="MGI:1345635">
    <property type="gene designation" value="Pcbp1"/>
</dbReference>
<dbReference type="VEuPathDB" id="HostDB:ENSMUSG00000051695"/>
<dbReference type="eggNOG" id="KOG2190">
    <property type="taxonomic scope" value="Eukaryota"/>
</dbReference>
<dbReference type="GeneTree" id="ENSGT00940000161582"/>
<dbReference type="HOGENOM" id="CLU_022670_0_1_1"/>
<dbReference type="InParanoid" id="P60335"/>
<dbReference type="OMA" id="SHHLIGY"/>
<dbReference type="OrthoDB" id="11836at9989"/>
<dbReference type="PhylomeDB" id="P60335"/>
<dbReference type="TreeFam" id="TF318292"/>
<dbReference type="Reactome" id="R-MMU-72163">
    <property type="pathway name" value="mRNA Splicing - Major Pathway"/>
</dbReference>
<dbReference type="Reactome" id="R-MMU-72203">
    <property type="pathway name" value="Processing of Capped Intron-Containing Pre-mRNA"/>
</dbReference>
<dbReference type="BioGRID-ORCS" id="23983">
    <property type="hits" value="21 hits in 62 CRISPR screens"/>
</dbReference>
<dbReference type="CD-CODE" id="CE726F99">
    <property type="entry name" value="Postsynaptic density"/>
</dbReference>
<dbReference type="CD-CODE" id="DE1E139C">
    <property type="entry name" value="Chromatoid body"/>
</dbReference>
<dbReference type="ChiTaRS" id="Pcbp1">
    <property type="organism name" value="mouse"/>
</dbReference>
<dbReference type="PRO" id="PR:P60335"/>
<dbReference type="Proteomes" id="UP000000589">
    <property type="component" value="Chromosome 6"/>
</dbReference>
<dbReference type="RNAct" id="P60335">
    <property type="molecule type" value="protein"/>
</dbReference>
<dbReference type="Bgee" id="ENSMUSG00000051695">
    <property type="expression patterns" value="Expressed in metanephric ureteric bud and 259 other cell types or tissues"/>
</dbReference>
<dbReference type="GO" id="GO:0005737">
    <property type="term" value="C:cytoplasm"/>
    <property type="evidence" value="ECO:0000314"/>
    <property type="project" value="MGI"/>
</dbReference>
<dbReference type="GO" id="GO:0036464">
    <property type="term" value="C:cytoplasmic ribonucleoprotein granule"/>
    <property type="evidence" value="ECO:0007669"/>
    <property type="project" value="Ensembl"/>
</dbReference>
<dbReference type="GO" id="GO:0005829">
    <property type="term" value="C:cytosol"/>
    <property type="evidence" value="ECO:0000315"/>
    <property type="project" value="MGI"/>
</dbReference>
<dbReference type="GO" id="GO:0016607">
    <property type="term" value="C:nuclear speck"/>
    <property type="evidence" value="ECO:0007669"/>
    <property type="project" value="Ensembl"/>
</dbReference>
<dbReference type="GO" id="GO:0005634">
    <property type="term" value="C:nucleus"/>
    <property type="evidence" value="ECO:0000314"/>
    <property type="project" value="MGI"/>
</dbReference>
<dbReference type="GO" id="GO:0014069">
    <property type="term" value="C:postsynaptic density"/>
    <property type="evidence" value="ECO:0007669"/>
    <property type="project" value="Ensembl"/>
</dbReference>
<dbReference type="GO" id="GO:1990904">
    <property type="term" value="C:ribonucleoprotein complex"/>
    <property type="evidence" value="ECO:0007669"/>
    <property type="project" value="UniProtKB-KW"/>
</dbReference>
<dbReference type="GO" id="GO:0000981">
    <property type="term" value="F:DNA-binding transcription factor activity, RNA polymerase II-specific"/>
    <property type="evidence" value="ECO:0000314"/>
    <property type="project" value="MGI"/>
</dbReference>
<dbReference type="GO" id="GO:0034986">
    <property type="term" value="F:iron chaperone activity"/>
    <property type="evidence" value="ECO:0000266"/>
    <property type="project" value="MGI"/>
</dbReference>
<dbReference type="GO" id="GO:0003730">
    <property type="term" value="F:mRNA 3'-UTR binding"/>
    <property type="evidence" value="ECO:0000250"/>
    <property type="project" value="UniProtKB"/>
</dbReference>
<dbReference type="GO" id="GO:0003723">
    <property type="term" value="F:RNA binding"/>
    <property type="evidence" value="ECO:0000304"/>
    <property type="project" value="MGI"/>
</dbReference>
<dbReference type="GO" id="GO:0098847">
    <property type="term" value="F:sequence-specific single stranded DNA binding"/>
    <property type="evidence" value="ECO:0000314"/>
    <property type="project" value="MGI"/>
</dbReference>
<dbReference type="GO" id="GO:0003697">
    <property type="term" value="F:single-stranded DNA binding"/>
    <property type="evidence" value="ECO:0000314"/>
    <property type="project" value="MGI"/>
</dbReference>
<dbReference type="GO" id="GO:0008494">
    <property type="term" value="F:translation activator activity"/>
    <property type="evidence" value="ECO:0000304"/>
    <property type="project" value="MGI"/>
</dbReference>
<dbReference type="GO" id="GO:0006397">
    <property type="term" value="P:mRNA processing"/>
    <property type="evidence" value="ECO:0000304"/>
    <property type="project" value="MGI"/>
</dbReference>
<dbReference type="GO" id="GO:0045944">
    <property type="term" value="P:positive regulation of transcription by RNA polymerase II"/>
    <property type="evidence" value="ECO:0000314"/>
    <property type="project" value="MGI"/>
</dbReference>
<dbReference type="GO" id="GO:0051604">
    <property type="term" value="P:protein maturation"/>
    <property type="evidence" value="ECO:0000266"/>
    <property type="project" value="MGI"/>
</dbReference>
<dbReference type="GO" id="GO:0039694">
    <property type="term" value="P:viral RNA genome replication"/>
    <property type="evidence" value="ECO:0007669"/>
    <property type="project" value="Ensembl"/>
</dbReference>
<dbReference type="CDD" id="cd22515">
    <property type="entry name" value="KH-I_PCBP1_2_rpt1"/>
    <property type="match status" value="1"/>
</dbReference>
<dbReference type="CDD" id="cd22518">
    <property type="entry name" value="KH-I_PCBP1_2_rpt2"/>
    <property type="match status" value="1"/>
</dbReference>
<dbReference type="CDD" id="cd22521">
    <property type="entry name" value="KH-I_PCBP1_2_rpt3"/>
    <property type="match status" value="1"/>
</dbReference>
<dbReference type="FunFam" id="3.30.1370.10:FF:000002">
    <property type="entry name" value="poly(RC)-binding protein 2 isoform X1"/>
    <property type="match status" value="1"/>
</dbReference>
<dbReference type="FunFam" id="3.30.1370.10:FF:000003">
    <property type="entry name" value="poly(RC)-binding protein 2 isoform X1"/>
    <property type="match status" value="1"/>
</dbReference>
<dbReference type="FunFam" id="3.30.1370.10:FF:000005">
    <property type="entry name" value="poly(RC)-binding protein 2 isoform X1"/>
    <property type="match status" value="1"/>
</dbReference>
<dbReference type="Gene3D" id="3.30.1370.10">
    <property type="entry name" value="K Homology domain, type 1"/>
    <property type="match status" value="3"/>
</dbReference>
<dbReference type="InterPro" id="IPR004087">
    <property type="entry name" value="KH_dom"/>
</dbReference>
<dbReference type="InterPro" id="IPR004088">
    <property type="entry name" value="KH_dom_type_1"/>
</dbReference>
<dbReference type="InterPro" id="IPR036612">
    <property type="entry name" value="KH_dom_type_1_sf"/>
</dbReference>
<dbReference type="PANTHER" id="PTHR10288">
    <property type="entry name" value="KH DOMAIN CONTAINING RNA BINDING PROTEIN"/>
    <property type="match status" value="1"/>
</dbReference>
<dbReference type="Pfam" id="PF00013">
    <property type="entry name" value="KH_1"/>
    <property type="match status" value="3"/>
</dbReference>
<dbReference type="SMART" id="SM00322">
    <property type="entry name" value="KH"/>
    <property type="match status" value="3"/>
</dbReference>
<dbReference type="SUPFAM" id="SSF54791">
    <property type="entry name" value="Eukaryotic type KH-domain (KH-domain type I)"/>
    <property type="match status" value="3"/>
</dbReference>
<dbReference type="PROSITE" id="PS50084">
    <property type="entry name" value="KH_TYPE_1"/>
    <property type="match status" value="3"/>
</dbReference>
<gene>
    <name type="primary">Pcbp1</name>
</gene>
<comment type="function">
    <text evidence="1 4">Single-stranded nucleic acid binding protein that binds preferentially to oligo dC (By similarity). Together with PCBP2, required for erythropoiesis, possibly by regulating mRNA splicing (PubMed:34180713).</text>
</comment>
<comment type="interaction">
    <interactant intactId="EBI-309059">
        <id>P60335</id>
    </interactant>
    <interactant intactId="EBI-645361">
        <id>Q99N13</id>
        <label>Hdac9</label>
    </interactant>
    <organismsDiffer>false</organismsDiffer>
    <experiments>6</experiments>
</comment>
<comment type="subcellular location">
    <subcellularLocation>
        <location evidence="1">Nucleus</location>
    </subcellularLocation>
    <subcellularLocation>
        <location evidence="1">Cytoplasm</location>
    </subcellularLocation>
    <text evidence="1">Loosely bound in the nucleus. May shuttle between the nucleus and the cytoplasm.</text>
</comment>
<comment type="PTM">
    <text evidence="1">Phosphorylated; lowers poly(rC)-binding activity.</text>
</comment>
<comment type="disruption phenotype">
    <text evidence="3 4">Embryonic lethality in the peri-implantation stage (between dpc 4.5 and dpc 8.5) (PubMed:26527618). Conditional deletion in the erythroid lineage is not lethal and does not lead to defects in the hematopoietic pathway (PubMed:34180713). Mice lacking Pcbp1 and Pcbp2 in the erythroid lineage die at midgestation; lethality is caused by impaired erythroid development and loss of blood formation (PubMed:34180713).</text>
</comment>